<sequence>MNSTLSSQVENHSIYYNFSEKNSQFLAFENDDCHLPLAMIFTLALAYGAVIILGVSGNLALIIIILKQKEMRNVTNILIVNLSFSDLLVAIMCLPFTFVYTLMDHWVFGEVMCKLNPFVQCVSITVSIFSLVLIAVERHQLIINPRGWRPSNRHAYVGIAVIWVLAVASSLPFLIYQVLTDEPFQNVTLDAFKDKYVCFDKFLSDSHRLSYTTLLLVLQYFGPLCFIFICYFKIYIRLKRRNNMMDKMRDNKYRSSETKRINVMLLSIVVAFAVCWLPLTIFNTVFDWNHQIIATCNHNLLFLLCHLTAMISTCINPIFYGFLNKNFQRDLQFFFNFCDFRSRDDDYEVIAMSTMHTDVSKTSLKQASPVALKKIHSDDNEKI</sequence>
<accession>O02835</accession>
<proteinExistence type="evidence at transcript level"/>
<protein>
    <recommendedName>
        <fullName>Neuropeptide Y receptor type 1</fullName>
        <shortName>NPY1-R</shortName>
    </recommendedName>
</protein>
<gene>
    <name type="primary">NPY1R</name>
</gene>
<name>NPY1R_PIG</name>
<comment type="function">
    <text>Receptor for neuropeptide Y and peptide YY.</text>
</comment>
<comment type="subcellular location">
    <subcellularLocation>
        <location>Cell membrane</location>
        <topology>Multi-pass membrane protein</topology>
    </subcellularLocation>
</comment>
<comment type="similarity">
    <text evidence="3">Belongs to the G-protein coupled receptor 1 family.</text>
</comment>
<feature type="chain" id="PRO_0000069922" description="Neuropeptide Y receptor type 1">
    <location>
        <begin position="1"/>
        <end position="383"/>
    </location>
</feature>
<feature type="topological domain" description="Extracellular" evidence="2">
    <location>
        <begin position="1"/>
        <end position="44"/>
    </location>
</feature>
<feature type="transmembrane region" description="Helical; Name=1" evidence="2">
    <location>
        <begin position="45"/>
        <end position="65"/>
    </location>
</feature>
<feature type="topological domain" description="Cytoplasmic" evidence="2">
    <location>
        <begin position="66"/>
        <end position="76"/>
    </location>
</feature>
<feature type="transmembrane region" description="Helical; Name=2" evidence="2">
    <location>
        <begin position="77"/>
        <end position="97"/>
    </location>
</feature>
<feature type="topological domain" description="Extracellular" evidence="2">
    <location>
        <begin position="98"/>
        <end position="116"/>
    </location>
</feature>
<feature type="transmembrane region" description="Helical; Name=3" evidence="2">
    <location>
        <begin position="117"/>
        <end position="137"/>
    </location>
</feature>
<feature type="topological domain" description="Cytoplasmic" evidence="2">
    <location>
        <begin position="138"/>
        <end position="154"/>
    </location>
</feature>
<feature type="transmembrane region" description="Helical; Name=4" evidence="2">
    <location>
        <begin position="155"/>
        <end position="175"/>
    </location>
</feature>
<feature type="topological domain" description="Extracellular" evidence="2">
    <location>
        <begin position="176"/>
        <end position="211"/>
    </location>
</feature>
<feature type="transmembrane region" description="Helical; Name=5" evidence="2">
    <location>
        <begin position="212"/>
        <end position="232"/>
    </location>
</feature>
<feature type="topological domain" description="Cytoplasmic" evidence="2">
    <location>
        <begin position="233"/>
        <end position="260"/>
    </location>
</feature>
<feature type="transmembrane region" description="Helical; Name=6" evidence="2">
    <location>
        <begin position="261"/>
        <end position="281"/>
    </location>
</feature>
<feature type="topological domain" description="Extracellular" evidence="2">
    <location>
        <begin position="282"/>
        <end position="299"/>
    </location>
</feature>
<feature type="transmembrane region" description="Helical; Name=7" evidence="2">
    <location>
        <begin position="300"/>
        <end position="320"/>
    </location>
</feature>
<feature type="topological domain" description="Cytoplasmic" evidence="2">
    <location>
        <begin position="321"/>
        <end position="383"/>
    </location>
</feature>
<feature type="modified residue" description="Phosphoserine" evidence="1">
    <location>
        <position position="368"/>
    </location>
</feature>
<feature type="lipid moiety-binding region" description="S-palmitoyl cysteine" evidence="2">
    <location>
        <position position="338"/>
    </location>
</feature>
<feature type="glycosylation site" description="N-linked (GlcNAc...) asparagine" evidence="2">
    <location>
        <position position="2"/>
    </location>
</feature>
<feature type="glycosylation site" description="N-linked (GlcNAc...) asparagine" evidence="2">
    <location>
        <position position="11"/>
    </location>
</feature>
<feature type="glycosylation site" description="N-linked (GlcNAc...) asparagine" evidence="2">
    <location>
        <position position="17"/>
    </location>
</feature>
<feature type="disulfide bond" evidence="3">
    <location>
        <begin position="113"/>
        <end position="198"/>
    </location>
</feature>
<feature type="sequence conflict" description="In Ref. 2; AAD13776." evidence="4" ref="2">
    <original>L</original>
    <variation>P</variation>
    <location>
        <position position="203"/>
    </location>
</feature>
<reference key="1">
    <citation type="journal article" date="1998" name="Regul. Pept.">
        <title>Characterization and molecular cloning of vascular neuropeptide Y receptor subtypes in pig and dog.</title>
        <authorList>
            <person name="Malmstroem R.E."/>
            <person name="Hoekfelt T."/>
            <person name="Bjoerkman J.-A."/>
            <person name="Nihlen C."/>
            <person name="Bystroem M."/>
            <person name="Ekstrand A.J."/>
            <person name="Lundberg J.M."/>
        </authorList>
    </citation>
    <scope>NUCLEOTIDE SEQUENCE</scope>
    <source>
        <tissue>Hypothalamus</tissue>
    </source>
</reference>
<reference key="2">
    <citation type="submission" date="1999-11" db="EMBL/GenBank/DDBJ databases">
        <title>Porcine NPY receptors NPY1R, NPY2R and NPY5R: cloning, mapping and comparative analysis.</title>
        <authorList>
            <person name="Wraith A."/>
            <person name="Tornsten A."/>
            <person name="Chardon P."/>
            <person name="Harbitz I."/>
            <person name="Chowdhary B.P."/>
            <person name="Andersson L."/>
            <person name="Larhammar D."/>
        </authorList>
    </citation>
    <scope>NUCLEOTIDE SEQUENCE [GENOMIC DNA]</scope>
</reference>
<evidence type="ECO:0000250" key="1">
    <source>
        <dbReference type="UniProtKB" id="P21555"/>
    </source>
</evidence>
<evidence type="ECO:0000255" key="2"/>
<evidence type="ECO:0000255" key="3">
    <source>
        <dbReference type="PROSITE-ProRule" id="PRU00521"/>
    </source>
</evidence>
<evidence type="ECO:0000305" key="4"/>
<dbReference type="EMBL" id="AF005779">
    <property type="protein sequence ID" value="AAC26836.1"/>
    <property type="molecule type" value="mRNA"/>
</dbReference>
<dbReference type="EMBL" id="AF106081">
    <property type="protein sequence ID" value="AAD13776.2"/>
    <property type="molecule type" value="Genomic_DNA"/>
</dbReference>
<dbReference type="RefSeq" id="NP_999453.1">
    <property type="nucleotide sequence ID" value="NM_214288.1"/>
</dbReference>
<dbReference type="RefSeq" id="XP_005666733.1">
    <property type="nucleotide sequence ID" value="XM_005666676.2"/>
</dbReference>
<dbReference type="RefSeq" id="XP_005666734.1">
    <property type="nucleotide sequence ID" value="XM_005666677.2"/>
</dbReference>
<dbReference type="SMR" id="O02835"/>
<dbReference type="FunCoup" id="O02835">
    <property type="interactions" value="184"/>
</dbReference>
<dbReference type="STRING" id="9823.ENSSSCP00000009480"/>
<dbReference type="GlyCosmos" id="O02835">
    <property type="glycosylation" value="3 sites, No reported glycans"/>
</dbReference>
<dbReference type="GlyGen" id="O02835">
    <property type="glycosylation" value="3 sites"/>
</dbReference>
<dbReference type="PaxDb" id="9823-ENSSSCP00000009480"/>
<dbReference type="GeneID" id="397547"/>
<dbReference type="KEGG" id="ssc:397547"/>
<dbReference type="CTD" id="4886"/>
<dbReference type="eggNOG" id="KOG3656">
    <property type="taxonomic scope" value="Eukaryota"/>
</dbReference>
<dbReference type="HOGENOM" id="CLU_009579_6_1_1"/>
<dbReference type="InParanoid" id="O02835"/>
<dbReference type="OrthoDB" id="9046662at2759"/>
<dbReference type="TreeFam" id="TF315303"/>
<dbReference type="Proteomes" id="UP000008227">
    <property type="component" value="Unplaced"/>
</dbReference>
<dbReference type="Proteomes" id="UP000314985">
    <property type="component" value="Unplaced"/>
</dbReference>
<dbReference type="Proteomes" id="UP000694570">
    <property type="component" value="Unplaced"/>
</dbReference>
<dbReference type="Proteomes" id="UP000694571">
    <property type="component" value="Unplaced"/>
</dbReference>
<dbReference type="Proteomes" id="UP000694720">
    <property type="component" value="Unplaced"/>
</dbReference>
<dbReference type="Proteomes" id="UP000694722">
    <property type="component" value="Unplaced"/>
</dbReference>
<dbReference type="Proteomes" id="UP000694723">
    <property type="component" value="Unplaced"/>
</dbReference>
<dbReference type="Proteomes" id="UP000694724">
    <property type="component" value="Unplaced"/>
</dbReference>
<dbReference type="Proteomes" id="UP000694725">
    <property type="component" value="Unplaced"/>
</dbReference>
<dbReference type="Proteomes" id="UP000694726">
    <property type="component" value="Unplaced"/>
</dbReference>
<dbReference type="Proteomes" id="UP000694727">
    <property type="component" value="Unplaced"/>
</dbReference>
<dbReference type="Proteomes" id="UP000694728">
    <property type="component" value="Unplaced"/>
</dbReference>
<dbReference type="GO" id="GO:0043005">
    <property type="term" value="C:neuron projection"/>
    <property type="evidence" value="ECO:0000318"/>
    <property type="project" value="GO_Central"/>
</dbReference>
<dbReference type="GO" id="GO:0005886">
    <property type="term" value="C:plasma membrane"/>
    <property type="evidence" value="ECO:0000318"/>
    <property type="project" value="GO_Central"/>
</dbReference>
<dbReference type="GO" id="GO:0042923">
    <property type="term" value="F:neuropeptide binding"/>
    <property type="evidence" value="ECO:0000318"/>
    <property type="project" value="GO_Central"/>
</dbReference>
<dbReference type="GO" id="GO:0008188">
    <property type="term" value="F:neuropeptide receptor activity"/>
    <property type="evidence" value="ECO:0000318"/>
    <property type="project" value="GO_Central"/>
</dbReference>
<dbReference type="GO" id="GO:0004983">
    <property type="term" value="F:neuropeptide Y receptor activity"/>
    <property type="evidence" value="ECO:0007669"/>
    <property type="project" value="InterPro"/>
</dbReference>
<dbReference type="CDD" id="cd15395">
    <property type="entry name" value="7tmA_NPY1R"/>
    <property type="match status" value="1"/>
</dbReference>
<dbReference type="FunFam" id="1.20.1070.10:FF:000062">
    <property type="entry name" value="Neuropeptide Y receptor type 1"/>
    <property type="match status" value="1"/>
</dbReference>
<dbReference type="Gene3D" id="1.20.1070.10">
    <property type="entry name" value="Rhodopsin 7-helix transmembrane proteins"/>
    <property type="match status" value="1"/>
</dbReference>
<dbReference type="InterPro" id="IPR000276">
    <property type="entry name" value="GPCR_Rhodpsn"/>
</dbReference>
<dbReference type="InterPro" id="IPR017452">
    <property type="entry name" value="GPCR_Rhodpsn_7TM"/>
</dbReference>
<dbReference type="InterPro" id="IPR000351">
    <property type="entry name" value="NPY1_rcpt"/>
</dbReference>
<dbReference type="InterPro" id="IPR000611">
    <property type="entry name" value="NPY_rcpt"/>
</dbReference>
<dbReference type="PANTHER" id="PTHR24235">
    <property type="entry name" value="NEUROPEPTIDE Y RECEPTOR"/>
    <property type="match status" value="1"/>
</dbReference>
<dbReference type="PANTHER" id="PTHR24235:SF24">
    <property type="entry name" value="NEUROPEPTIDE Y RECEPTOR TYPE 1"/>
    <property type="match status" value="1"/>
</dbReference>
<dbReference type="Pfam" id="PF00001">
    <property type="entry name" value="7tm_1"/>
    <property type="match status" value="1"/>
</dbReference>
<dbReference type="PRINTS" id="PR00237">
    <property type="entry name" value="GPCRRHODOPSN"/>
</dbReference>
<dbReference type="PRINTS" id="PR01013">
    <property type="entry name" value="NRPEPTIDEY1R"/>
</dbReference>
<dbReference type="PRINTS" id="PR01012">
    <property type="entry name" value="NRPEPTIDEYR"/>
</dbReference>
<dbReference type="SUPFAM" id="SSF81321">
    <property type="entry name" value="Family A G protein-coupled receptor-like"/>
    <property type="match status" value="1"/>
</dbReference>
<dbReference type="PROSITE" id="PS00237">
    <property type="entry name" value="G_PROTEIN_RECEP_F1_1"/>
    <property type="match status" value="1"/>
</dbReference>
<dbReference type="PROSITE" id="PS50262">
    <property type="entry name" value="G_PROTEIN_RECEP_F1_2"/>
    <property type="match status" value="1"/>
</dbReference>
<keyword id="KW-1003">Cell membrane</keyword>
<keyword id="KW-1015">Disulfide bond</keyword>
<keyword id="KW-0297">G-protein coupled receptor</keyword>
<keyword id="KW-0325">Glycoprotein</keyword>
<keyword id="KW-0449">Lipoprotein</keyword>
<keyword id="KW-0472">Membrane</keyword>
<keyword id="KW-0564">Palmitate</keyword>
<keyword id="KW-0597">Phosphoprotein</keyword>
<keyword id="KW-0675">Receptor</keyword>
<keyword id="KW-1185">Reference proteome</keyword>
<keyword id="KW-0807">Transducer</keyword>
<keyword id="KW-0812">Transmembrane</keyword>
<keyword id="KW-1133">Transmembrane helix</keyword>
<organism>
    <name type="scientific">Sus scrofa</name>
    <name type="common">Pig</name>
    <dbReference type="NCBI Taxonomy" id="9823"/>
    <lineage>
        <taxon>Eukaryota</taxon>
        <taxon>Metazoa</taxon>
        <taxon>Chordata</taxon>
        <taxon>Craniata</taxon>
        <taxon>Vertebrata</taxon>
        <taxon>Euteleostomi</taxon>
        <taxon>Mammalia</taxon>
        <taxon>Eutheria</taxon>
        <taxon>Laurasiatheria</taxon>
        <taxon>Artiodactyla</taxon>
        <taxon>Suina</taxon>
        <taxon>Suidae</taxon>
        <taxon>Sus</taxon>
    </lineage>
</organism>